<accession>A6U306</accession>
<keyword id="KW-0067">ATP-binding</keyword>
<keyword id="KW-0436">Ligase</keyword>
<keyword id="KW-0547">Nucleotide-binding</keyword>
<keyword id="KW-0648">Protein biosynthesis</keyword>
<feature type="chain" id="PRO_1000076197" description="Aspartyl/glutamyl-tRNA(Asn/Gln) amidotransferase subunit C">
    <location>
        <begin position="1"/>
        <end position="100"/>
    </location>
</feature>
<organism>
    <name type="scientific">Staphylococcus aureus (strain JH1)</name>
    <dbReference type="NCBI Taxonomy" id="359787"/>
    <lineage>
        <taxon>Bacteria</taxon>
        <taxon>Bacillati</taxon>
        <taxon>Bacillota</taxon>
        <taxon>Bacilli</taxon>
        <taxon>Bacillales</taxon>
        <taxon>Staphylococcaceae</taxon>
        <taxon>Staphylococcus</taxon>
    </lineage>
</organism>
<proteinExistence type="inferred from homology"/>
<comment type="function">
    <text evidence="1">Allows the formation of correctly charged Asn-tRNA(Asn) or Gln-tRNA(Gln) through the transamidation of misacylated Asp-tRNA(Asn) or Glu-tRNA(Gln) in organisms which lack either or both of asparaginyl-tRNA or glutaminyl-tRNA synthetases. The reaction takes place in the presence of glutamine and ATP through an activated phospho-Asp-tRNA(Asn) or phospho-Glu-tRNA(Gln).</text>
</comment>
<comment type="catalytic activity">
    <reaction evidence="1">
        <text>L-glutamyl-tRNA(Gln) + L-glutamine + ATP + H2O = L-glutaminyl-tRNA(Gln) + L-glutamate + ADP + phosphate + H(+)</text>
        <dbReference type="Rhea" id="RHEA:17521"/>
        <dbReference type="Rhea" id="RHEA-COMP:9681"/>
        <dbReference type="Rhea" id="RHEA-COMP:9684"/>
        <dbReference type="ChEBI" id="CHEBI:15377"/>
        <dbReference type="ChEBI" id="CHEBI:15378"/>
        <dbReference type="ChEBI" id="CHEBI:29985"/>
        <dbReference type="ChEBI" id="CHEBI:30616"/>
        <dbReference type="ChEBI" id="CHEBI:43474"/>
        <dbReference type="ChEBI" id="CHEBI:58359"/>
        <dbReference type="ChEBI" id="CHEBI:78520"/>
        <dbReference type="ChEBI" id="CHEBI:78521"/>
        <dbReference type="ChEBI" id="CHEBI:456216"/>
    </reaction>
</comment>
<comment type="catalytic activity">
    <reaction evidence="1">
        <text>L-aspartyl-tRNA(Asn) + L-glutamine + ATP + H2O = L-asparaginyl-tRNA(Asn) + L-glutamate + ADP + phosphate + 2 H(+)</text>
        <dbReference type="Rhea" id="RHEA:14513"/>
        <dbReference type="Rhea" id="RHEA-COMP:9674"/>
        <dbReference type="Rhea" id="RHEA-COMP:9677"/>
        <dbReference type="ChEBI" id="CHEBI:15377"/>
        <dbReference type="ChEBI" id="CHEBI:15378"/>
        <dbReference type="ChEBI" id="CHEBI:29985"/>
        <dbReference type="ChEBI" id="CHEBI:30616"/>
        <dbReference type="ChEBI" id="CHEBI:43474"/>
        <dbReference type="ChEBI" id="CHEBI:58359"/>
        <dbReference type="ChEBI" id="CHEBI:78515"/>
        <dbReference type="ChEBI" id="CHEBI:78516"/>
        <dbReference type="ChEBI" id="CHEBI:456216"/>
    </reaction>
</comment>
<comment type="subunit">
    <text evidence="1">Heterotrimer of A, B and C subunits.</text>
</comment>
<comment type="similarity">
    <text evidence="1">Belongs to the GatC family.</text>
</comment>
<dbReference type="EC" id="6.3.5.-" evidence="1"/>
<dbReference type="EMBL" id="CP000736">
    <property type="protein sequence ID" value="ABR52824.1"/>
    <property type="molecule type" value="Genomic_DNA"/>
</dbReference>
<dbReference type="SMR" id="A6U306"/>
<dbReference type="KEGG" id="sah:SaurJH1_1990"/>
<dbReference type="HOGENOM" id="CLU_105899_1_2_9"/>
<dbReference type="GO" id="GO:0050566">
    <property type="term" value="F:asparaginyl-tRNA synthase (glutamine-hydrolyzing) activity"/>
    <property type="evidence" value="ECO:0007669"/>
    <property type="project" value="RHEA"/>
</dbReference>
<dbReference type="GO" id="GO:0005524">
    <property type="term" value="F:ATP binding"/>
    <property type="evidence" value="ECO:0007669"/>
    <property type="project" value="UniProtKB-KW"/>
</dbReference>
<dbReference type="GO" id="GO:0050567">
    <property type="term" value="F:glutaminyl-tRNA synthase (glutamine-hydrolyzing) activity"/>
    <property type="evidence" value="ECO:0007669"/>
    <property type="project" value="UniProtKB-UniRule"/>
</dbReference>
<dbReference type="GO" id="GO:0070681">
    <property type="term" value="P:glutaminyl-tRNAGln biosynthesis via transamidation"/>
    <property type="evidence" value="ECO:0007669"/>
    <property type="project" value="TreeGrafter"/>
</dbReference>
<dbReference type="GO" id="GO:0006450">
    <property type="term" value="P:regulation of translational fidelity"/>
    <property type="evidence" value="ECO:0007669"/>
    <property type="project" value="InterPro"/>
</dbReference>
<dbReference type="GO" id="GO:0006412">
    <property type="term" value="P:translation"/>
    <property type="evidence" value="ECO:0007669"/>
    <property type="project" value="UniProtKB-UniRule"/>
</dbReference>
<dbReference type="Gene3D" id="1.10.20.60">
    <property type="entry name" value="Glu-tRNAGln amidotransferase C subunit, N-terminal domain"/>
    <property type="match status" value="1"/>
</dbReference>
<dbReference type="HAMAP" id="MF_00122">
    <property type="entry name" value="GatC"/>
    <property type="match status" value="1"/>
</dbReference>
<dbReference type="InterPro" id="IPR036113">
    <property type="entry name" value="Asp/Glu-ADT_sf_sub_c"/>
</dbReference>
<dbReference type="InterPro" id="IPR003837">
    <property type="entry name" value="GatC"/>
</dbReference>
<dbReference type="NCBIfam" id="TIGR00135">
    <property type="entry name" value="gatC"/>
    <property type="match status" value="1"/>
</dbReference>
<dbReference type="PANTHER" id="PTHR15004">
    <property type="entry name" value="GLUTAMYL-TRNA(GLN) AMIDOTRANSFERASE SUBUNIT C, MITOCHONDRIAL"/>
    <property type="match status" value="1"/>
</dbReference>
<dbReference type="PANTHER" id="PTHR15004:SF0">
    <property type="entry name" value="GLUTAMYL-TRNA(GLN) AMIDOTRANSFERASE SUBUNIT C, MITOCHONDRIAL"/>
    <property type="match status" value="1"/>
</dbReference>
<dbReference type="Pfam" id="PF02686">
    <property type="entry name" value="GatC"/>
    <property type="match status" value="1"/>
</dbReference>
<dbReference type="SUPFAM" id="SSF141000">
    <property type="entry name" value="Glu-tRNAGln amidotransferase C subunit"/>
    <property type="match status" value="1"/>
</dbReference>
<gene>
    <name evidence="1" type="primary">gatC</name>
    <name type="ordered locus">SaurJH1_1990</name>
</gene>
<sequence length="100" mass="11268">MTKVTREEVEHIANLARLQISPEETEEMANTLESILDFAKQNDSADTEGVEPTYHVLDLQNVLREDKAIKGIPQELALKNAKETEDGQFKVPTIMNEEDA</sequence>
<evidence type="ECO:0000255" key="1">
    <source>
        <dbReference type="HAMAP-Rule" id="MF_00122"/>
    </source>
</evidence>
<protein>
    <recommendedName>
        <fullName evidence="1">Aspartyl/glutamyl-tRNA(Asn/Gln) amidotransferase subunit C</fullName>
        <shortName evidence="1">Asp/Glu-ADT subunit C</shortName>
        <ecNumber evidence="1">6.3.5.-</ecNumber>
    </recommendedName>
</protein>
<reference key="1">
    <citation type="submission" date="2007-06" db="EMBL/GenBank/DDBJ databases">
        <title>Complete sequence of chromosome of Staphylococcus aureus subsp. aureus JH1.</title>
        <authorList>
            <consortium name="US DOE Joint Genome Institute"/>
            <person name="Copeland A."/>
            <person name="Lucas S."/>
            <person name="Lapidus A."/>
            <person name="Barry K."/>
            <person name="Detter J.C."/>
            <person name="Glavina del Rio T."/>
            <person name="Hammon N."/>
            <person name="Israni S."/>
            <person name="Dalin E."/>
            <person name="Tice H."/>
            <person name="Pitluck S."/>
            <person name="Chain P."/>
            <person name="Malfatti S."/>
            <person name="Shin M."/>
            <person name="Vergez L."/>
            <person name="Schmutz J."/>
            <person name="Larimer F."/>
            <person name="Land M."/>
            <person name="Hauser L."/>
            <person name="Kyrpides N."/>
            <person name="Ivanova N."/>
            <person name="Tomasz A."/>
            <person name="Richardson P."/>
        </authorList>
    </citation>
    <scope>NUCLEOTIDE SEQUENCE [LARGE SCALE GENOMIC DNA]</scope>
    <source>
        <strain>JH1</strain>
    </source>
</reference>
<name>GATC_STAA2</name>